<proteinExistence type="inferred from homology"/>
<organism>
    <name type="scientific">Vibrio parahaemolyticus serotype O3:K6 (strain RIMD 2210633)</name>
    <dbReference type="NCBI Taxonomy" id="223926"/>
    <lineage>
        <taxon>Bacteria</taxon>
        <taxon>Pseudomonadati</taxon>
        <taxon>Pseudomonadota</taxon>
        <taxon>Gammaproteobacteria</taxon>
        <taxon>Vibrionales</taxon>
        <taxon>Vibrionaceae</taxon>
        <taxon>Vibrio</taxon>
    </lineage>
</organism>
<feature type="chain" id="PRO_0000196737" description="Putative phosphoenolpyruvate synthase regulatory protein">
    <location>
        <begin position="1"/>
        <end position="278"/>
    </location>
</feature>
<feature type="binding site" evidence="1">
    <location>
        <begin position="157"/>
        <end position="164"/>
    </location>
    <ligand>
        <name>ADP</name>
        <dbReference type="ChEBI" id="CHEBI:456216"/>
    </ligand>
</feature>
<sequence length="278" mass="31524">MQINNQSRDVFYVSDGTAITCETLGHVVLGQFPFIPNEKTFPFVESQDKVADVVKEIETSYQRNGVKPLVFFSIVVPGVREMLLEAPAYSYDVLESIVQKVQDDIQMAPAPKLQRSRSVGKDSDTYFDRIAAIEYTLAHDDGITLKGLEQADIILLGVSRSGKTPTSLYMAMQFGLRVVNYPFIAEDVKMMRLLPEFEVHRHKLFGLTITPERLNEIRENRLSGSDYASEEQCKLELDTVEALFRREAIPYINTSSLSVEEISTRILERAGMKRRLFG</sequence>
<dbReference type="EC" id="2.7.11.33" evidence="1"/>
<dbReference type="EC" id="2.7.4.28" evidence="1"/>
<dbReference type="EMBL" id="BA000032">
    <property type="protein sequence ID" value="BAC61716.1"/>
    <property type="molecule type" value="Genomic_DNA"/>
</dbReference>
<dbReference type="RefSeq" id="NP_799883.1">
    <property type="nucleotide sequence ID" value="NC_004605.1"/>
</dbReference>
<dbReference type="RefSeq" id="WP_005464081.1">
    <property type="nucleotide sequence ID" value="NC_004605.1"/>
</dbReference>
<dbReference type="SMR" id="Q87J80"/>
<dbReference type="GeneID" id="1191061"/>
<dbReference type="KEGG" id="vpa:VPA0373"/>
<dbReference type="PATRIC" id="fig|223926.6.peg.3317"/>
<dbReference type="eggNOG" id="COG1806">
    <property type="taxonomic scope" value="Bacteria"/>
</dbReference>
<dbReference type="HOGENOM" id="CLU_046206_1_0_6"/>
<dbReference type="Proteomes" id="UP000002493">
    <property type="component" value="Chromosome 2"/>
</dbReference>
<dbReference type="GO" id="GO:0043531">
    <property type="term" value="F:ADP binding"/>
    <property type="evidence" value="ECO:0007669"/>
    <property type="project" value="UniProtKB-UniRule"/>
</dbReference>
<dbReference type="GO" id="GO:0005524">
    <property type="term" value="F:ATP binding"/>
    <property type="evidence" value="ECO:0007669"/>
    <property type="project" value="InterPro"/>
</dbReference>
<dbReference type="GO" id="GO:0016776">
    <property type="term" value="F:phosphotransferase activity, phosphate group as acceptor"/>
    <property type="evidence" value="ECO:0007669"/>
    <property type="project" value="UniProtKB-UniRule"/>
</dbReference>
<dbReference type="GO" id="GO:0004674">
    <property type="term" value="F:protein serine/threonine kinase activity"/>
    <property type="evidence" value="ECO:0007669"/>
    <property type="project" value="UniProtKB-UniRule"/>
</dbReference>
<dbReference type="HAMAP" id="MF_01062">
    <property type="entry name" value="PSRP"/>
    <property type="match status" value="1"/>
</dbReference>
<dbReference type="InterPro" id="IPR005177">
    <property type="entry name" value="Kinase-pyrophosphorylase"/>
</dbReference>
<dbReference type="InterPro" id="IPR026530">
    <property type="entry name" value="PSRP"/>
</dbReference>
<dbReference type="NCBIfam" id="NF003742">
    <property type="entry name" value="PRK05339.1"/>
    <property type="match status" value="1"/>
</dbReference>
<dbReference type="PANTHER" id="PTHR31756">
    <property type="entry name" value="PYRUVATE, PHOSPHATE DIKINASE REGULATORY PROTEIN 1, CHLOROPLASTIC"/>
    <property type="match status" value="1"/>
</dbReference>
<dbReference type="PANTHER" id="PTHR31756:SF3">
    <property type="entry name" value="PYRUVATE, PHOSPHATE DIKINASE REGULATORY PROTEIN 1, CHLOROPLASTIC"/>
    <property type="match status" value="1"/>
</dbReference>
<dbReference type="Pfam" id="PF03618">
    <property type="entry name" value="Kinase-PPPase"/>
    <property type="match status" value="1"/>
</dbReference>
<gene>
    <name type="ordered locus">VPA0373</name>
</gene>
<name>PSRP_VIBPA</name>
<reference key="1">
    <citation type="journal article" date="2003" name="Lancet">
        <title>Genome sequence of Vibrio parahaemolyticus: a pathogenic mechanism distinct from that of V. cholerae.</title>
        <authorList>
            <person name="Makino K."/>
            <person name="Oshima K."/>
            <person name="Kurokawa K."/>
            <person name="Yokoyama K."/>
            <person name="Uda T."/>
            <person name="Tagomori K."/>
            <person name="Iijima Y."/>
            <person name="Najima M."/>
            <person name="Nakano M."/>
            <person name="Yamashita A."/>
            <person name="Kubota Y."/>
            <person name="Kimura S."/>
            <person name="Yasunaga T."/>
            <person name="Honda T."/>
            <person name="Shinagawa H."/>
            <person name="Hattori M."/>
            <person name="Iida T."/>
        </authorList>
    </citation>
    <scope>NUCLEOTIDE SEQUENCE [LARGE SCALE GENOMIC DNA]</scope>
    <source>
        <strain>RIMD 2210633</strain>
    </source>
</reference>
<evidence type="ECO:0000255" key="1">
    <source>
        <dbReference type="HAMAP-Rule" id="MF_01062"/>
    </source>
</evidence>
<comment type="function">
    <text evidence="1">Bifunctional serine/threonine kinase and phosphorylase involved in the regulation of the phosphoenolpyruvate synthase (PEPS) by catalyzing its phosphorylation/dephosphorylation.</text>
</comment>
<comment type="catalytic activity">
    <reaction evidence="1">
        <text>[pyruvate, water dikinase] + ADP = [pyruvate, water dikinase]-phosphate + AMP + H(+)</text>
        <dbReference type="Rhea" id="RHEA:46020"/>
        <dbReference type="Rhea" id="RHEA-COMP:11425"/>
        <dbReference type="Rhea" id="RHEA-COMP:11426"/>
        <dbReference type="ChEBI" id="CHEBI:15378"/>
        <dbReference type="ChEBI" id="CHEBI:43176"/>
        <dbReference type="ChEBI" id="CHEBI:68546"/>
        <dbReference type="ChEBI" id="CHEBI:456215"/>
        <dbReference type="ChEBI" id="CHEBI:456216"/>
        <dbReference type="EC" id="2.7.11.33"/>
    </reaction>
</comment>
<comment type="catalytic activity">
    <reaction evidence="1">
        <text>[pyruvate, water dikinase]-phosphate + phosphate + H(+) = [pyruvate, water dikinase] + diphosphate</text>
        <dbReference type="Rhea" id="RHEA:48580"/>
        <dbReference type="Rhea" id="RHEA-COMP:11425"/>
        <dbReference type="Rhea" id="RHEA-COMP:11426"/>
        <dbReference type="ChEBI" id="CHEBI:15378"/>
        <dbReference type="ChEBI" id="CHEBI:33019"/>
        <dbReference type="ChEBI" id="CHEBI:43176"/>
        <dbReference type="ChEBI" id="CHEBI:43474"/>
        <dbReference type="ChEBI" id="CHEBI:68546"/>
        <dbReference type="EC" id="2.7.4.28"/>
    </reaction>
</comment>
<comment type="similarity">
    <text evidence="1">Belongs to the pyruvate, phosphate/water dikinase regulatory protein family. PSRP subfamily.</text>
</comment>
<protein>
    <recommendedName>
        <fullName evidence="1">Putative phosphoenolpyruvate synthase regulatory protein</fullName>
        <shortName evidence="1">PEP synthase regulatory protein</shortName>
        <shortName evidence="1">PSRP</shortName>
        <ecNumber evidence="1">2.7.11.33</ecNumber>
        <ecNumber evidence="1">2.7.4.28</ecNumber>
    </recommendedName>
    <alternativeName>
        <fullName evidence="1">Pyruvate, water dikinase regulatory protein</fullName>
    </alternativeName>
</protein>
<keyword id="KW-0418">Kinase</keyword>
<keyword id="KW-0547">Nucleotide-binding</keyword>
<keyword id="KW-0723">Serine/threonine-protein kinase</keyword>
<keyword id="KW-0808">Transferase</keyword>
<accession>Q87J80</accession>